<sequence>MAYNHFSIPKNIEEKENSFFDVTFQDEPDETTSTATGIAKVSIPTPKPSTPLSTLTNGSTIQQSMTNQPEPTSQVPPISAKPPMDDATYATQQLTLRALLSTREAGIIIGKAGKNVAELRSTTNVKAGVTKAVPNVHDRVLTISGPLENVVRAYRFIIDIFAKNSTNPDGTPSDANTPRKLRLLIAHSLMGSIIGRNGLRIKLIQDKCSCRMIASKDMLPQSTERTVEIHGTVDNLHAAIWEIGKCLIDDWERGAGTVFYNPVSRLTQPLPSLASTASPQQVSPPAAPSTTSGEAIPENFVSYGAQVFPATQMPFLQQPKVTQNISIPADMVGCIIGRGGSKISEIRRTSGSKISIAKEPHDETGERMFTITGTHEENEKALFLLYQQLEMEKDRRSH</sequence>
<dbReference type="EMBL" id="CU329672">
    <property type="protein sequence ID" value="CAA21234.1"/>
    <property type="molecule type" value="Genomic_DNA"/>
</dbReference>
<dbReference type="PIR" id="T41600">
    <property type="entry name" value="T41600"/>
</dbReference>
<dbReference type="RefSeq" id="NP_587684.1">
    <property type="nucleotide sequence ID" value="NM_001022679.2"/>
</dbReference>
<dbReference type="SMR" id="O74919"/>
<dbReference type="BioGRID" id="275997">
    <property type="interactions" value="165"/>
</dbReference>
<dbReference type="FunCoup" id="O74919">
    <property type="interactions" value="704"/>
</dbReference>
<dbReference type="IntAct" id="O74919">
    <property type="interactions" value="1"/>
</dbReference>
<dbReference type="STRING" id="284812.O74919"/>
<dbReference type="iPTMnet" id="O74919"/>
<dbReference type="PaxDb" id="4896-SPCC757.09c.1"/>
<dbReference type="EnsemblFungi" id="SPCC757.09c.1">
    <property type="protein sequence ID" value="SPCC757.09c.1:pep"/>
    <property type="gene ID" value="SPCC757.09c"/>
</dbReference>
<dbReference type="GeneID" id="2539434"/>
<dbReference type="KEGG" id="spo:2539434"/>
<dbReference type="PomBase" id="SPCC757.09c">
    <property type="gene designation" value="rnc1"/>
</dbReference>
<dbReference type="VEuPathDB" id="FungiDB:SPCC757.09c"/>
<dbReference type="eggNOG" id="KOG2190">
    <property type="taxonomic scope" value="Eukaryota"/>
</dbReference>
<dbReference type="HOGENOM" id="CLU_022670_4_2_1"/>
<dbReference type="InParanoid" id="O74919"/>
<dbReference type="OMA" id="SIAKEPH"/>
<dbReference type="PhylomeDB" id="O74919"/>
<dbReference type="PRO" id="PR:O74919"/>
<dbReference type="Proteomes" id="UP000002485">
    <property type="component" value="Chromosome III"/>
</dbReference>
<dbReference type="GO" id="GO:0005737">
    <property type="term" value="C:cytoplasm"/>
    <property type="evidence" value="ECO:0000318"/>
    <property type="project" value="GO_Central"/>
</dbReference>
<dbReference type="GO" id="GO:0005829">
    <property type="term" value="C:cytosol"/>
    <property type="evidence" value="ECO:0007005"/>
    <property type="project" value="PomBase"/>
</dbReference>
<dbReference type="GO" id="GO:0005634">
    <property type="term" value="C:nucleus"/>
    <property type="evidence" value="ECO:0000318"/>
    <property type="project" value="GO_Central"/>
</dbReference>
<dbReference type="GO" id="GO:0035925">
    <property type="term" value="F:mRNA 3'-UTR AU-rich region binding"/>
    <property type="evidence" value="ECO:0000314"/>
    <property type="project" value="PomBase"/>
</dbReference>
<dbReference type="GO" id="GO:0003730">
    <property type="term" value="F:mRNA 3'-UTR binding"/>
    <property type="evidence" value="ECO:0000353"/>
    <property type="project" value="PomBase"/>
</dbReference>
<dbReference type="GO" id="GO:0003729">
    <property type="term" value="F:mRNA binding"/>
    <property type="evidence" value="ECO:0000353"/>
    <property type="project" value="PomBase"/>
</dbReference>
<dbReference type="GO" id="GO:0061158">
    <property type="term" value="P:3'-UTR-mediated mRNA destabilization"/>
    <property type="evidence" value="ECO:0000269"/>
    <property type="project" value="PomBase"/>
</dbReference>
<dbReference type="GO" id="GO:0070935">
    <property type="term" value="P:3'-UTR-mediated mRNA stabilization"/>
    <property type="evidence" value="ECO:0000315"/>
    <property type="project" value="PomBase"/>
</dbReference>
<dbReference type="GO" id="GO:1903138">
    <property type="term" value="P:negative regulation of cell integrity MAPK cascade"/>
    <property type="evidence" value="ECO:0000315"/>
    <property type="project" value="PomBase"/>
</dbReference>
<dbReference type="GO" id="GO:1903753">
    <property type="term" value="P:negative regulation of p38MAPK cascade"/>
    <property type="evidence" value="ECO:0000314"/>
    <property type="project" value="PomBase"/>
</dbReference>
<dbReference type="CDD" id="cd22455">
    <property type="entry name" value="KH-I_Rnc1_rpt1"/>
    <property type="match status" value="1"/>
</dbReference>
<dbReference type="CDD" id="cd22456">
    <property type="entry name" value="KH-I_Rnc1_rpt2"/>
    <property type="match status" value="1"/>
</dbReference>
<dbReference type="CDD" id="cd22457">
    <property type="entry name" value="KH-I_Rnc1_rpt3"/>
    <property type="match status" value="1"/>
</dbReference>
<dbReference type="Gene3D" id="3.30.1370.10">
    <property type="entry name" value="K Homology domain, type 1"/>
    <property type="match status" value="3"/>
</dbReference>
<dbReference type="InterPro" id="IPR004087">
    <property type="entry name" value="KH_dom"/>
</dbReference>
<dbReference type="InterPro" id="IPR004088">
    <property type="entry name" value="KH_dom_type_1"/>
</dbReference>
<dbReference type="InterPro" id="IPR036612">
    <property type="entry name" value="KH_dom_type_1_sf"/>
</dbReference>
<dbReference type="InterPro" id="IPR049786">
    <property type="entry name" value="Rnc1_KH-I_3"/>
</dbReference>
<dbReference type="PANTHER" id="PTHR10288">
    <property type="entry name" value="KH DOMAIN CONTAINING RNA BINDING PROTEIN"/>
    <property type="match status" value="1"/>
</dbReference>
<dbReference type="Pfam" id="PF00013">
    <property type="entry name" value="KH_1"/>
    <property type="match status" value="3"/>
</dbReference>
<dbReference type="SMART" id="SM00322">
    <property type="entry name" value="KH"/>
    <property type="match status" value="3"/>
</dbReference>
<dbReference type="SUPFAM" id="SSF54791">
    <property type="entry name" value="Eukaryotic type KH-domain (KH-domain type I)"/>
    <property type="match status" value="3"/>
</dbReference>
<dbReference type="PROSITE" id="PS50084">
    <property type="entry name" value="KH_TYPE_1"/>
    <property type="match status" value="3"/>
</dbReference>
<name>RNC1_SCHPO</name>
<keyword id="KW-0963">Cytoplasm</keyword>
<keyword id="KW-0597">Phosphoprotein</keyword>
<keyword id="KW-1185">Reference proteome</keyword>
<keyword id="KW-0677">Repeat</keyword>
<keyword id="KW-0694">RNA-binding</keyword>
<evidence type="ECO:0000255" key="1">
    <source>
        <dbReference type="PROSITE-ProRule" id="PRU00117"/>
    </source>
</evidence>
<evidence type="ECO:0000256" key="2">
    <source>
        <dbReference type="SAM" id="MobiDB-lite"/>
    </source>
</evidence>
<evidence type="ECO:0000269" key="3">
    <source>
    </source>
</evidence>
<evidence type="ECO:0000269" key="4">
    <source>
    </source>
</evidence>
<evidence type="ECO:0000305" key="5"/>
<evidence type="ECO:0000312" key="6">
    <source>
        <dbReference type="EMBL" id="CAA21234.1"/>
    </source>
</evidence>
<gene>
    <name evidence="6" type="primary">rnc1</name>
    <name type="ORF">SPCC757.09c</name>
</gene>
<feature type="chain" id="PRO_0000334490" description="RNA-binding protein rnc1">
    <location>
        <begin position="1"/>
        <end position="398"/>
    </location>
</feature>
<feature type="domain" description="KH 1" evidence="1">
    <location>
        <begin position="93"/>
        <end position="157"/>
    </location>
</feature>
<feature type="domain" description="KH 2" evidence="1">
    <location>
        <begin position="178"/>
        <end position="243"/>
    </location>
</feature>
<feature type="domain" description="KH 3" evidence="1">
    <location>
        <begin position="320"/>
        <end position="385"/>
    </location>
</feature>
<feature type="region of interest" description="Disordered" evidence="2">
    <location>
        <begin position="40"/>
        <end position="78"/>
    </location>
</feature>
<feature type="region of interest" description="Disordered" evidence="2">
    <location>
        <begin position="274"/>
        <end position="295"/>
    </location>
</feature>
<feature type="compositionally biased region" description="Polar residues" evidence="2">
    <location>
        <begin position="57"/>
        <end position="76"/>
    </location>
</feature>
<feature type="compositionally biased region" description="Low complexity" evidence="2">
    <location>
        <begin position="274"/>
        <end position="290"/>
    </location>
</feature>
<feature type="modified residue" description="Phosphothreonine" evidence="3">
    <location>
        <position position="50"/>
    </location>
</feature>
<feature type="mutagenesis site" description="Fails to suppress the Cl(-) sensitivity of calcineurin deletion. No longer phosphorylated." evidence="3">
    <original>T</original>
    <variation>A</variation>
    <location>
        <position position="50"/>
    </location>
</feature>
<feature type="mutagenesis site" description="Potently suppresses the Cl(-) sensitivity of calcineurin deletion compared with wild type." evidence="3">
    <original>T</original>
    <variation>D</variation>
    <variation>E</variation>
    <location>
        <position position="50"/>
    </location>
</feature>
<feature type="mutagenesis site" description="Barely detectable binding to pmp1 mRNA. Fails to suppress the Cl(-) sensitivity of calcineurin deletion." evidence="3">
    <original>G</original>
    <variation>D</variation>
    <location>
        <position position="110"/>
    </location>
</feature>
<feature type="mutagenesis site" description="Barely detectable binding to pmp1 mRNA. Fails to suppress the Cl(-) sensitivity of calcineurin deletion." evidence="3">
    <original>G</original>
    <variation>D</variation>
    <location>
        <position position="195"/>
    </location>
</feature>
<feature type="mutagenesis site" description="Barely detectable binding to pmp1 mRNA. Fails to suppress the Cl(-) sensitivity of calcineurin deletion." evidence="3">
    <original>G</original>
    <variation>D</variation>
    <location>
        <position position="337"/>
    </location>
</feature>
<protein>
    <recommendedName>
        <fullName>RNA-binding protein rnc1</fullName>
    </recommendedName>
    <alternativeName>
        <fullName>RNA-binding protein that suppresses calcineurin deletion 1</fullName>
    </alternativeName>
</protein>
<proteinExistence type="evidence at protein level"/>
<organism>
    <name type="scientific">Schizosaccharomyces pombe (strain 972 / ATCC 24843)</name>
    <name type="common">Fission yeast</name>
    <dbReference type="NCBI Taxonomy" id="284812"/>
    <lineage>
        <taxon>Eukaryota</taxon>
        <taxon>Fungi</taxon>
        <taxon>Dikarya</taxon>
        <taxon>Ascomycota</taxon>
        <taxon>Taphrinomycotina</taxon>
        <taxon>Schizosaccharomycetes</taxon>
        <taxon>Schizosaccharomycetales</taxon>
        <taxon>Schizosaccharomycetaceae</taxon>
        <taxon>Schizosaccharomyces</taxon>
    </lineage>
</organism>
<accession>O74919</accession>
<reference evidence="6" key="1">
    <citation type="journal article" date="2002" name="Nature">
        <title>The genome sequence of Schizosaccharomyces pombe.</title>
        <authorList>
            <person name="Wood V."/>
            <person name="Gwilliam R."/>
            <person name="Rajandream M.A."/>
            <person name="Lyne M.H."/>
            <person name="Lyne R."/>
            <person name="Stewart A."/>
            <person name="Sgouros J.G."/>
            <person name="Peat N."/>
            <person name="Hayles J."/>
            <person name="Baker S.G."/>
            <person name="Basham D."/>
            <person name="Bowman S."/>
            <person name="Brooks K."/>
            <person name="Brown D."/>
            <person name="Brown S."/>
            <person name="Chillingworth T."/>
            <person name="Churcher C.M."/>
            <person name="Collins M."/>
            <person name="Connor R."/>
            <person name="Cronin A."/>
            <person name="Davis P."/>
            <person name="Feltwell T."/>
            <person name="Fraser A."/>
            <person name="Gentles S."/>
            <person name="Goble A."/>
            <person name="Hamlin N."/>
            <person name="Harris D.E."/>
            <person name="Hidalgo J."/>
            <person name="Hodgson G."/>
            <person name="Holroyd S."/>
            <person name="Hornsby T."/>
            <person name="Howarth S."/>
            <person name="Huckle E.J."/>
            <person name="Hunt S."/>
            <person name="Jagels K."/>
            <person name="James K.D."/>
            <person name="Jones L."/>
            <person name="Jones M."/>
            <person name="Leather S."/>
            <person name="McDonald S."/>
            <person name="McLean J."/>
            <person name="Mooney P."/>
            <person name="Moule S."/>
            <person name="Mungall K.L."/>
            <person name="Murphy L.D."/>
            <person name="Niblett D."/>
            <person name="Odell C."/>
            <person name="Oliver K."/>
            <person name="O'Neil S."/>
            <person name="Pearson D."/>
            <person name="Quail M.A."/>
            <person name="Rabbinowitsch E."/>
            <person name="Rutherford K.M."/>
            <person name="Rutter S."/>
            <person name="Saunders D."/>
            <person name="Seeger K."/>
            <person name="Sharp S."/>
            <person name="Skelton J."/>
            <person name="Simmonds M.N."/>
            <person name="Squares R."/>
            <person name="Squares S."/>
            <person name="Stevens K."/>
            <person name="Taylor K."/>
            <person name="Taylor R.G."/>
            <person name="Tivey A."/>
            <person name="Walsh S.V."/>
            <person name="Warren T."/>
            <person name="Whitehead S."/>
            <person name="Woodward J.R."/>
            <person name="Volckaert G."/>
            <person name="Aert R."/>
            <person name="Robben J."/>
            <person name="Grymonprez B."/>
            <person name="Weltjens I."/>
            <person name="Vanstreels E."/>
            <person name="Rieger M."/>
            <person name="Schaefer M."/>
            <person name="Mueller-Auer S."/>
            <person name="Gabel C."/>
            <person name="Fuchs M."/>
            <person name="Duesterhoeft A."/>
            <person name="Fritzc C."/>
            <person name="Holzer E."/>
            <person name="Moestl D."/>
            <person name="Hilbert H."/>
            <person name="Borzym K."/>
            <person name="Langer I."/>
            <person name="Beck A."/>
            <person name="Lehrach H."/>
            <person name="Reinhardt R."/>
            <person name="Pohl T.M."/>
            <person name="Eger P."/>
            <person name="Zimmermann W."/>
            <person name="Wedler H."/>
            <person name="Wambutt R."/>
            <person name="Purnelle B."/>
            <person name="Goffeau A."/>
            <person name="Cadieu E."/>
            <person name="Dreano S."/>
            <person name="Gloux S."/>
            <person name="Lelaure V."/>
            <person name="Mottier S."/>
            <person name="Galibert F."/>
            <person name="Aves S.J."/>
            <person name="Xiang Z."/>
            <person name="Hunt C."/>
            <person name="Moore K."/>
            <person name="Hurst S.M."/>
            <person name="Lucas M."/>
            <person name="Rochet M."/>
            <person name="Gaillardin C."/>
            <person name="Tallada V.A."/>
            <person name="Garzon A."/>
            <person name="Thode G."/>
            <person name="Daga R.R."/>
            <person name="Cruzado L."/>
            <person name="Jimenez J."/>
            <person name="Sanchez M."/>
            <person name="del Rey F."/>
            <person name="Benito J."/>
            <person name="Dominguez A."/>
            <person name="Revuelta J.L."/>
            <person name="Moreno S."/>
            <person name="Armstrong J."/>
            <person name="Forsburg S.L."/>
            <person name="Cerutti L."/>
            <person name="Lowe T."/>
            <person name="McCombie W.R."/>
            <person name="Paulsen I."/>
            <person name="Potashkin J."/>
            <person name="Shpakovski G.V."/>
            <person name="Ussery D."/>
            <person name="Barrell B.G."/>
            <person name="Nurse P."/>
        </authorList>
    </citation>
    <scope>NUCLEOTIDE SEQUENCE [LARGE SCALE GENOMIC DNA]</scope>
    <source>
        <strain>972 / ATCC 24843</strain>
    </source>
</reference>
<reference evidence="5" key="2">
    <citation type="journal article" date="2003" name="Nature">
        <title>Feedback regulation of MAPK signalling by an RNA-binding protein.</title>
        <authorList>
            <person name="Sugiura R."/>
            <person name="Kita A."/>
            <person name="Shimizu Y."/>
            <person name="Shuntoh H."/>
            <person name="Sio S.O."/>
            <person name="Kuno T."/>
        </authorList>
    </citation>
    <scope>FUNCTION</scope>
    <scope>PHOSPHORYLATION AT THR-50</scope>
    <scope>MUTAGENESIS OF THR-50; GLY-110; GLY-195 AND GLY-337</scope>
</reference>
<reference evidence="5" key="3">
    <citation type="journal article" date="2006" name="Nat. Biotechnol.">
        <title>ORFeome cloning and global analysis of protein localization in the fission yeast Schizosaccharomyces pombe.</title>
        <authorList>
            <person name="Matsuyama A."/>
            <person name="Arai R."/>
            <person name="Yashiroda Y."/>
            <person name="Shirai A."/>
            <person name="Kamata A."/>
            <person name="Sekido S."/>
            <person name="Kobayashi Y."/>
            <person name="Hashimoto A."/>
            <person name="Hamamoto M."/>
            <person name="Hiraoka Y."/>
            <person name="Horinouchi S."/>
            <person name="Yoshida M."/>
        </authorList>
    </citation>
    <scope>SUBCELLULAR LOCATION [LARGE SCALE ANALYSIS]</scope>
</reference>
<comment type="function">
    <text evidence="3">Binds and stabilizes pmp1 mRNA and hence acts as a negative regulator of pmk1 signaling. Overexpression suppresses the Cl(-) sensitivity of calcineurin deletion.</text>
</comment>
<comment type="subcellular location">
    <subcellularLocation>
        <location evidence="4">Cytoplasm</location>
    </subcellularLocation>
</comment>
<comment type="PTM">
    <text evidence="3">Phosphorylated by pmk1. Phosphorylation causes enhancement of the RNA-binding activity.</text>
</comment>